<reference key="1">
    <citation type="journal article" date="1999" name="Nature">
        <title>Genomic sequence comparison of two unrelated isolates of the human gastric pathogen Helicobacter pylori.</title>
        <authorList>
            <person name="Alm R.A."/>
            <person name="Ling L.-S.L."/>
            <person name="Moir D.T."/>
            <person name="King B.L."/>
            <person name="Brown E.D."/>
            <person name="Doig P.C."/>
            <person name="Smith D.R."/>
            <person name="Noonan B."/>
            <person name="Guild B.C."/>
            <person name="deJonge B.L."/>
            <person name="Carmel G."/>
            <person name="Tummino P.J."/>
            <person name="Caruso A."/>
            <person name="Uria-Nickelsen M."/>
            <person name="Mills D.M."/>
            <person name="Ives C."/>
            <person name="Gibson R."/>
            <person name="Merberg D."/>
            <person name="Mills S.D."/>
            <person name="Jiang Q."/>
            <person name="Taylor D.E."/>
            <person name="Vovis G.F."/>
            <person name="Trust T.J."/>
        </authorList>
    </citation>
    <scope>NUCLEOTIDE SEQUENCE [LARGE SCALE GENOMIC DNA]</scope>
    <source>
        <strain>J99 / ATCC 700824</strain>
    </source>
</reference>
<accession>Q9ZM37</accession>
<keyword id="KW-0028">Amino-acid biosynthesis</keyword>
<keyword id="KW-0057">Aromatic amino acid biosynthesis</keyword>
<keyword id="KW-0456">Lyase</keyword>
<sequence>MKILVIQGPNLNMLGHRDPRLYGMVTLDQIHEIMQTFVKQGNLDVELEFFQTNFEGEIIDKIQESVGSDYEGIIINPGAFSHTSIAIADAIMLAGKPVIEVHLTNIQAREEFRKNSYTGAACGGVIMGFGPLGYNMALMAMVNILAEMKAFQEAQKNNPNNPNNPINNQK</sequence>
<dbReference type="EC" id="4.2.1.10"/>
<dbReference type="EMBL" id="AE001439">
    <property type="protein sequence ID" value="AAD05961.1"/>
    <property type="molecule type" value="Genomic_DNA"/>
</dbReference>
<dbReference type="PIR" id="H71937">
    <property type="entry name" value="H71937"/>
</dbReference>
<dbReference type="RefSeq" id="WP_000699286.1">
    <property type="nucleotide sequence ID" value="NZ_CP011330.1"/>
</dbReference>
<dbReference type="SMR" id="Q9ZM37"/>
<dbReference type="KEGG" id="hpj:jhp_0386"/>
<dbReference type="PATRIC" id="fig|85963.30.peg.624"/>
<dbReference type="eggNOG" id="COG0757">
    <property type="taxonomic scope" value="Bacteria"/>
</dbReference>
<dbReference type="UniPathway" id="UPA00053">
    <property type="reaction ID" value="UER00086"/>
</dbReference>
<dbReference type="Proteomes" id="UP000000804">
    <property type="component" value="Chromosome"/>
</dbReference>
<dbReference type="GO" id="GO:0003855">
    <property type="term" value="F:3-dehydroquinate dehydratase activity"/>
    <property type="evidence" value="ECO:0007669"/>
    <property type="project" value="UniProtKB-UniRule"/>
</dbReference>
<dbReference type="GO" id="GO:0008652">
    <property type="term" value="P:amino acid biosynthetic process"/>
    <property type="evidence" value="ECO:0007669"/>
    <property type="project" value="UniProtKB-KW"/>
</dbReference>
<dbReference type="GO" id="GO:0009073">
    <property type="term" value="P:aromatic amino acid family biosynthetic process"/>
    <property type="evidence" value="ECO:0007669"/>
    <property type="project" value="UniProtKB-KW"/>
</dbReference>
<dbReference type="GO" id="GO:0009423">
    <property type="term" value="P:chorismate biosynthetic process"/>
    <property type="evidence" value="ECO:0007669"/>
    <property type="project" value="UniProtKB-UniRule"/>
</dbReference>
<dbReference type="GO" id="GO:0019631">
    <property type="term" value="P:quinate catabolic process"/>
    <property type="evidence" value="ECO:0007669"/>
    <property type="project" value="TreeGrafter"/>
</dbReference>
<dbReference type="CDD" id="cd00466">
    <property type="entry name" value="DHQase_II"/>
    <property type="match status" value="1"/>
</dbReference>
<dbReference type="Gene3D" id="3.40.50.9100">
    <property type="entry name" value="Dehydroquinase, class II"/>
    <property type="match status" value="1"/>
</dbReference>
<dbReference type="HAMAP" id="MF_00169">
    <property type="entry name" value="AroQ"/>
    <property type="match status" value="1"/>
</dbReference>
<dbReference type="InterPro" id="IPR001874">
    <property type="entry name" value="DHquinase_II"/>
</dbReference>
<dbReference type="InterPro" id="IPR018509">
    <property type="entry name" value="DHquinase_II_CS"/>
</dbReference>
<dbReference type="InterPro" id="IPR036441">
    <property type="entry name" value="DHquinase_II_sf"/>
</dbReference>
<dbReference type="NCBIfam" id="TIGR01088">
    <property type="entry name" value="aroQ"/>
    <property type="match status" value="1"/>
</dbReference>
<dbReference type="NCBIfam" id="NF003805">
    <property type="entry name" value="PRK05395.1-2"/>
    <property type="match status" value="1"/>
</dbReference>
<dbReference type="NCBIfam" id="NF003806">
    <property type="entry name" value="PRK05395.1-3"/>
    <property type="match status" value="1"/>
</dbReference>
<dbReference type="NCBIfam" id="NF003807">
    <property type="entry name" value="PRK05395.1-4"/>
    <property type="match status" value="1"/>
</dbReference>
<dbReference type="PANTHER" id="PTHR21272">
    <property type="entry name" value="CATABOLIC 3-DEHYDROQUINASE"/>
    <property type="match status" value="1"/>
</dbReference>
<dbReference type="PANTHER" id="PTHR21272:SF3">
    <property type="entry name" value="CATABOLIC 3-DEHYDROQUINASE"/>
    <property type="match status" value="1"/>
</dbReference>
<dbReference type="Pfam" id="PF01220">
    <property type="entry name" value="DHquinase_II"/>
    <property type="match status" value="1"/>
</dbReference>
<dbReference type="PIRSF" id="PIRSF001399">
    <property type="entry name" value="DHquinase_II"/>
    <property type="match status" value="1"/>
</dbReference>
<dbReference type="SUPFAM" id="SSF52304">
    <property type="entry name" value="Type II 3-dehydroquinate dehydratase"/>
    <property type="match status" value="1"/>
</dbReference>
<dbReference type="PROSITE" id="PS01029">
    <property type="entry name" value="DEHYDROQUINASE_II"/>
    <property type="match status" value="1"/>
</dbReference>
<organism>
    <name type="scientific">Helicobacter pylori (strain J99 / ATCC 700824)</name>
    <name type="common">Campylobacter pylori J99</name>
    <dbReference type="NCBI Taxonomy" id="85963"/>
    <lineage>
        <taxon>Bacteria</taxon>
        <taxon>Pseudomonadati</taxon>
        <taxon>Campylobacterota</taxon>
        <taxon>Epsilonproteobacteria</taxon>
        <taxon>Campylobacterales</taxon>
        <taxon>Helicobacteraceae</taxon>
        <taxon>Helicobacter</taxon>
    </lineage>
</organism>
<feature type="chain" id="PRO_0000159906" description="3-dehydroquinate dehydratase">
    <location>
        <begin position="1"/>
        <end position="170"/>
    </location>
</feature>
<feature type="active site" description="Proton acceptor" evidence="1">
    <location>
        <position position="22"/>
    </location>
</feature>
<feature type="active site" description="Proton donor" evidence="1">
    <location>
        <position position="102"/>
    </location>
</feature>
<feature type="binding site" evidence="1">
    <location>
        <position position="76"/>
    </location>
    <ligand>
        <name>substrate</name>
    </ligand>
</feature>
<feature type="binding site" evidence="1">
    <location>
        <position position="82"/>
    </location>
    <ligand>
        <name>substrate</name>
    </ligand>
</feature>
<feature type="binding site" evidence="1">
    <location>
        <position position="89"/>
    </location>
    <ligand>
        <name>substrate</name>
    </ligand>
</feature>
<feature type="binding site" evidence="1">
    <location>
        <begin position="103"/>
        <end position="104"/>
    </location>
    <ligand>
        <name>substrate</name>
    </ligand>
</feature>
<feature type="binding site" evidence="1">
    <location>
        <position position="113"/>
    </location>
    <ligand>
        <name>substrate</name>
    </ligand>
</feature>
<feature type="site" description="Transition state stabilizer" evidence="1">
    <location>
        <position position="17"/>
    </location>
</feature>
<proteinExistence type="inferred from homology"/>
<protein>
    <recommendedName>
        <fullName>3-dehydroquinate dehydratase</fullName>
        <shortName>3-dehydroquinase</shortName>
        <ecNumber>4.2.1.10</ecNumber>
    </recommendedName>
    <alternativeName>
        <fullName>Type II DHQase</fullName>
    </alternativeName>
</protein>
<comment type="function">
    <text evidence="1">Catalyzes a trans-dehydration via an enolate intermediate.</text>
</comment>
<comment type="catalytic activity">
    <reaction>
        <text>3-dehydroquinate = 3-dehydroshikimate + H2O</text>
        <dbReference type="Rhea" id="RHEA:21096"/>
        <dbReference type="ChEBI" id="CHEBI:15377"/>
        <dbReference type="ChEBI" id="CHEBI:16630"/>
        <dbReference type="ChEBI" id="CHEBI:32364"/>
        <dbReference type="EC" id="4.2.1.10"/>
    </reaction>
</comment>
<comment type="pathway">
    <text>Metabolic intermediate biosynthesis; chorismate biosynthesis; chorismate from D-erythrose 4-phosphate and phosphoenolpyruvate: step 3/7.</text>
</comment>
<comment type="subunit">
    <text evidence="1">Homododecamer.</text>
</comment>
<comment type="similarity">
    <text evidence="2">Belongs to the type-II 3-dehydroquinase family.</text>
</comment>
<name>AROQ_HELPJ</name>
<evidence type="ECO:0000250" key="1"/>
<evidence type="ECO:0000305" key="2"/>
<gene>
    <name type="primary">aroQ</name>
    <name type="ordered locus">jhp_0386</name>
</gene>